<proteinExistence type="inferred from homology"/>
<name>GLMM_PSEP1</name>
<gene>
    <name evidence="1" type="primary">glmM</name>
    <name type="ordered locus">Pput_4582</name>
</gene>
<accession>A5W992</accession>
<protein>
    <recommendedName>
        <fullName evidence="1">Phosphoglucosamine mutase</fullName>
        <ecNumber evidence="1">5.4.2.10</ecNumber>
    </recommendedName>
</protein>
<organism>
    <name type="scientific">Pseudomonas putida (strain ATCC 700007 / DSM 6899 / JCM 31910 / BCRC 17059 / LMG 24140 / F1)</name>
    <dbReference type="NCBI Taxonomy" id="351746"/>
    <lineage>
        <taxon>Bacteria</taxon>
        <taxon>Pseudomonadati</taxon>
        <taxon>Pseudomonadota</taxon>
        <taxon>Gammaproteobacteria</taxon>
        <taxon>Pseudomonadales</taxon>
        <taxon>Pseudomonadaceae</taxon>
        <taxon>Pseudomonas</taxon>
    </lineage>
</organism>
<comment type="function">
    <text evidence="1">Catalyzes the conversion of glucosamine-6-phosphate to glucosamine-1-phosphate.</text>
</comment>
<comment type="catalytic activity">
    <reaction evidence="1">
        <text>alpha-D-glucosamine 1-phosphate = D-glucosamine 6-phosphate</text>
        <dbReference type="Rhea" id="RHEA:23424"/>
        <dbReference type="ChEBI" id="CHEBI:58516"/>
        <dbReference type="ChEBI" id="CHEBI:58725"/>
        <dbReference type="EC" id="5.4.2.10"/>
    </reaction>
</comment>
<comment type="cofactor">
    <cofactor evidence="1">
        <name>Mg(2+)</name>
        <dbReference type="ChEBI" id="CHEBI:18420"/>
    </cofactor>
    <text evidence="1">Binds 1 Mg(2+) ion per subunit.</text>
</comment>
<comment type="PTM">
    <text evidence="1">Activated by phosphorylation.</text>
</comment>
<comment type="similarity">
    <text evidence="1">Belongs to the phosphohexose mutase family.</text>
</comment>
<dbReference type="EC" id="5.4.2.10" evidence="1"/>
<dbReference type="EMBL" id="CP000712">
    <property type="protein sequence ID" value="ABQ80702.1"/>
    <property type="molecule type" value="Genomic_DNA"/>
</dbReference>
<dbReference type="SMR" id="A5W992"/>
<dbReference type="KEGG" id="ppf:Pput_4582"/>
<dbReference type="eggNOG" id="COG1109">
    <property type="taxonomic scope" value="Bacteria"/>
</dbReference>
<dbReference type="HOGENOM" id="CLU_016950_7_0_6"/>
<dbReference type="GO" id="GO:0005829">
    <property type="term" value="C:cytosol"/>
    <property type="evidence" value="ECO:0007669"/>
    <property type="project" value="TreeGrafter"/>
</dbReference>
<dbReference type="GO" id="GO:0000287">
    <property type="term" value="F:magnesium ion binding"/>
    <property type="evidence" value="ECO:0007669"/>
    <property type="project" value="UniProtKB-UniRule"/>
</dbReference>
<dbReference type="GO" id="GO:0008966">
    <property type="term" value="F:phosphoglucosamine mutase activity"/>
    <property type="evidence" value="ECO:0007669"/>
    <property type="project" value="UniProtKB-UniRule"/>
</dbReference>
<dbReference type="GO" id="GO:0004615">
    <property type="term" value="F:phosphomannomutase activity"/>
    <property type="evidence" value="ECO:0007669"/>
    <property type="project" value="TreeGrafter"/>
</dbReference>
<dbReference type="GO" id="GO:0005975">
    <property type="term" value="P:carbohydrate metabolic process"/>
    <property type="evidence" value="ECO:0007669"/>
    <property type="project" value="InterPro"/>
</dbReference>
<dbReference type="GO" id="GO:0009252">
    <property type="term" value="P:peptidoglycan biosynthetic process"/>
    <property type="evidence" value="ECO:0007669"/>
    <property type="project" value="TreeGrafter"/>
</dbReference>
<dbReference type="GO" id="GO:0006048">
    <property type="term" value="P:UDP-N-acetylglucosamine biosynthetic process"/>
    <property type="evidence" value="ECO:0007669"/>
    <property type="project" value="TreeGrafter"/>
</dbReference>
<dbReference type="CDD" id="cd05802">
    <property type="entry name" value="GlmM"/>
    <property type="match status" value="1"/>
</dbReference>
<dbReference type="FunFam" id="3.30.310.50:FF:000001">
    <property type="entry name" value="Phosphoglucosamine mutase"/>
    <property type="match status" value="1"/>
</dbReference>
<dbReference type="FunFam" id="3.40.120.10:FF:000001">
    <property type="entry name" value="Phosphoglucosamine mutase"/>
    <property type="match status" value="1"/>
</dbReference>
<dbReference type="FunFam" id="3.40.120.10:FF:000003">
    <property type="entry name" value="Phosphoglucosamine mutase"/>
    <property type="match status" value="1"/>
</dbReference>
<dbReference type="Gene3D" id="3.40.120.10">
    <property type="entry name" value="Alpha-D-Glucose-1,6-Bisphosphate, subunit A, domain 3"/>
    <property type="match status" value="3"/>
</dbReference>
<dbReference type="Gene3D" id="3.30.310.50">
    <property type="entry name" value="Alpha-D-phosphohexomutase, C-terminal domain"/>
    <property type="match status" value="1"/>
</dbReference>
<dbReference type="HAMAP" id="MF_01554_B">
    <property type="entry name" value="GlmM_B"/>
    <property type="match status" value="1"/>
</dbReference>
<dbReference type="InterPro" id="IPR005844">
    <property type="entry name" value="A-D-PHexomutase_a/b/a-I"/>
</dbReference>
<dbReference type="InterPro" id="IPR016055">
    <property type="entry name" value="A-D-PHexomutase_a/b/a-I/II/III"/>
</dbReference>
<dbReference type="InterPro" id="IPR005845">
    <property type="entry name" value="A-D-PHexomutase_a/b/a-II"/>
</dbReference>
<dbReference type="InterPro" id="IPR005846">
    <property type="entry name" value="A-D-PHexomutase_a/b/a-III"/>
</dbReference>
<dbReference type="InterPro" id="IPR005843">
    <property type="entry name" value="A-D-PHexomutase_C"/>
</dbReference>
<dbReference type="InterPro" id="IPR036900">
    <property type="entry name" value="A-D-PHexomutase_C_sf"/>
</dbReference>
<dbReference type="InterPro" id="IPR016066">
    <property type="entry name" value="A-D-PHexomutase_CS"/>
</dbReference>
<dbReference type="InterPro" id="IPR005841">
    <property type="entry name" value="Alpha-D-phosphohexomutase_SF"/>
</dbReference>
<dbReference type="InterPro" id="IPR006352">
    <property type="entry name" value="GlmM_bact"/>
</dbReference>
<dbReference type="InterPro" id="IPR050060">
    <property type="entry name" value="Phosphoglucosamine_mutase"/>
</dbReference>
<dbReference type="NCBIfam" id="TIGR01455">
    <property type="entry name" value="glmM"/>
    <property type="match status" value="1"/>
</dbReference>
<dbReference type="NCBIfam" id="NF008139">
    <property type="entry name" value="PRK10887.1"/>
    <property type="match status" value="1"/>
</dbReference>
<dbReference type="PANTHER" id="PTHR42946:SF1">
    <property type="entry name" value="PHOSPHOGLUCOMUTASE (ALPHA-D-GLUCOSE-1,6-BISPHOSPHATE-DEPENDENT)"/>
    <property type="match status" value="1"/>
</dbReference>
<dbReference type="PANTHER" id="PTHR42946">
    <property type="entry name" value="PHOSPHOHEXOSE MUTASE"/>
    <property type="match status" value="1"/>
</dbReference>
<dbReference type="Pfam" id="PF02878">
    <property type="entry name" value="PGM_PMM_I"/>
    <property type="match status" value="1"/>
</dbReference>
<dbReference type="Pfam" id="PF02879">
    <property type="entry name" value="PGM_PMM_II"/>
    <property type="match status" value="1"/>
</dbReference>
<dbReference type="Pfam" id="PF02880">
    <property type="entry name" value="PGM_PMM_III"/>
    <property type="match status" value="1"/>
</dbReference>
<dbReference type="Pfam" id="PF00408">
    <property type="entry name" value="PGM_PMM_IV"/>
    <property type="match status" value="1"/>
</dbReference>
<dbReference type="PRINTS" id="PR00509">
    <property type="entry name" value="PGMPMM"/>
</dbReference>
<dbReference type="SUPFAM" id="SSF55957">
    <property type="entry name" value="Phosphoglucomutase, C-terminal domain"/>
    <property type="match status" value="1"/>
</dbReference>
<dbReference type="SUPFAM" id="SSF53738">
    <property type="entry name" value="Phosphoglucomutase, first 3 domains"/>
    <property type="match status" value="3"/>
</dbReference>
<dbReference type="PROSITE" id="PS00710">
    <property type="entry name" value="PGM_PMM"/>
    <property type="match status" value="1"/>
</dbReference>
<keyword id="KW-0413">Isomerase</keyword>
<keyword id="KW-0460">Magnesium</keyword>
<keyword id="KW-0479">Metal-binding</keyword>
<keyword id="KW-0597">Phosphoprotein</keyword>
<evidence type="ECO:0000255" key="1">
    <source>
        <dbReference type="HAMAP-Rule" id="MF_01554"/>
    </source>
</evidence>
<sequence length="446" mass="47774">MSRKYFGTDGIRGRVGEYPITPDFMLKLGWAAGMAFRKQGHCRVLVGKDTRISGYMFESALEAGLSAAGADVMLLGPMPTPAIAYLTRTFHAEAGIVISASHNPHDDNGIKFFSGQGTKLPDEVELMIEELLDQPMTVIESGKLGKVSRINDAAGRYIEFCKSSVPSSTSFEGLKLVVDCAHGATYKVAPSVFRELGADVTVLHAQPDGLNINEGCGSTHIESLQAAVLVGHADLGIAFDGDGDRVLMVDHTGAIVDGDELLFIIARDLQEHGKLQGGVVGTLMSNLGLELALKDLDIPFVRAKVGDRYVMAELLEREWLVGGENSGHVVCCNHTTTGDAIIAALQVLMALKRRGETLAQARQALRKCPQVLINVRFGASKVDPLEHPAVKEASAKVTDALAGRGRVLLRKSGTEPLVRVMVEGEDESQVRAHAEALAKLVSEVCV</sequence>
<reference key="1">
    <citation type="submission" date="2007-05" db="EMBL/GenBank/DDBJ databases">
        <title>Complete sequence of Pseudomonas putida F1.</title>
        <authorList>
            <consortium name="US DOE Joint Genome Institute"/>
            <person name="Copeland A."/>
            <person name="Lucas S."/>
            <person name="Lapidus A."/>
            <person name="Barry K."/>
            <person name="Detter J.C."/>
            <person name="Glavina del Rio T."/>
            <person name="Hammon N."/>
            <person name="Israni S."/>
            <person name="Dalin E."/>
            <person name="Tice H."/>
            <person name="Pitluck S."/>
            <person name="Chain P."/>
            <person name="Malfatti S."/>
            <person name="Shin M."/>
            <person name="Vergez L."/>
            <person name="Schmutz J."/>
            <person name="Larimer F."/>
            <person name="Land M."/>
            <person name="Hauser L."/>
            <person name="Kyrpides N."/>
            <person name="Lykidis A."/>
            <person name="Parales R."/>
            <person name="Richardson P."/>
        </authorList>
    </citation>
    <scope>NUCLEOTIDE SEQUENCE [LARGE SCALE GENOMIC DNA]</scope>
    <source>
        <strain>ATCC 700007 / DSM 6899 / JCM 31910 / BCRC 17059 / LMG 24140 / F1</strain>
    </source>
</reference>
<feature type="chain" id="PRO_1000068912" description="Phosphoglucosamine mutase">
    <location>
        <begin position="1"/>
        <end position="446"/>
    </location>
</feature>
<feature type="active site" description="Phosphoserine intermediate" evidence="1">
    <location>
        <position position="101"/>
    </location>
</feature>
<feature type="binding site" description="via phosphate group" evidence="1">
    <location>
        <position position="101"/>
    </location>
    <ligand>
        <name>Mg(2+)</name>
        <dbReference type="ChEBI" id="CHEBI:18420"/>
    </ligand>
</feature>
<feature type="binding site" evidence="1">
    <location>
        <position position="240"/>
    </location>
    <ligand>
        <name>Mg(2+)</name>
        <dbReference type="ChEBI" id="CHEBI:18420"/>
    </ligand>
</feature>
<feature type="binding site" evidence="1">
    <location>
        <position position="242"/>
    </location>
    <ligand>
        <name>Mg(2+)</name>
        <dbReference type="ChEBI" id="CHEBI:18420"/>
    </ligand>
</feature>
<feature type="binding site" evidence="1">
    <location>
        <position position="244"/>
    </location>
    <ligand>
        <name>Mg(2+)</name>
        <dbReference type="ChEBI" id="CHEBI:18420"/>
    </ligand>
</feature>
<feature type="modified residue" description="Phosphoserine" evidence="1">
    <location>
        <position position="101"/>
    </location>
</feature>